<protein>
    <recommendedName>
        <fullName>Ribonuclease pancreatic</fullName>
        <ecNumber>4.6.1.18</ecNumber>
    </recommendedName>
    <alternativeName>
        <fullName>RNase 1</fullName>
    </alternativeName>
    <alternativeName>
        <fullName>RNase A</fullName>
    </alternativeName>
</protein>
<sequence>RESPAMKFQRQHMDSGNSPGNNPNYCNQMMMRRKMTQGRCKPVNTFVHESLEDVKAVCSQKNVLCKNGRTNCYESNSTMHITDCRQTGSSKYPNCAYKTSQKEKHIIVACEGNPYVPVHFDNSV</sequence>
<feature type="chain" id="PRO_0000057180" description="Ribonuclease pancreatic">
    <location>
        <begin position="1"/>
        <end position="124"/>
    </location>
</feature>
<feature type="region of interest" description="Disordered" evidence="2">
    <location>
        <begin position="1"/>
        <end position="23"/>
    </location>
</feature>
<feature type="compositionally biased region" description="Polar residues" evidence="2">
    <location>
        <begin position="14"/>
        <end position="23"/>
    </location>
</feature>
<feature type="active site" description="Proton acceptor" evidence="1">
    <location>
        <position position="12"/>
    </location>
</feature>
<feature type="active site" description="Proton donor" evidence="1">
    <location>
        <position position="119"/>
    </location>
</feature>
<feature type="binding site" evidence="1">
    <location>
        <position position="7"/>
    </location>
    <ligand>
        <name>substrate</name>
    </ligand>
</feature>
<feature type="binding site" evidence="1">
    <location>
        <position position="10"/>
    </location>
    <ligand>
        <name>substrate</name>
    </ligand>
</feature>
<feature type="binding site" evidence="1">
    <location>
        <begin position="41"/>
        <end position="45"/>
    </location>
    <ligand>
        <name>substrate</name>
    </ligand>
</feature>
<feature type="binding site" evidence="1">
    <location>
        <position position="66"/>
    </location>
    <ligand>
        <name>substrate</name>
    </ligand>
</feature>
<feature type="binding site" evidence="1">
    <location>
        <position position="85"/>
    </location>
    <ligand>
        <name>substrate</name>
    </ligand>
</feature>
<feature type="glycosylation site" description="N-linked (GlcNAc...) asparagine; partial" evidence="3">
    <location>
        <position position="76"/>
    </location>
</feature>
<feature type="disulfide bond" evidence="1">
    <location>
        <begin position="26"/>
        <end position="84"/>
    </location>
</feature>
<feature type="disulfide bond" evidence="1">
    <location>
        <begin position="40"/>
        <end position="95"/>
    </location>
</feature>
<feature type="disulfide bond" evidence="1">
    <location>
        <begin position="58"/>
        <end position="110"/>
    </location>
</feature>
<feature type="disulfide bond" evidence="1">
    <location>
        <begin position="65"/>
        <end position="72"/>
    </location>
</feature>
<keyword id="KW-0903">Direct protein sequencing</keyword>
<keyword id="KW-1015">Disulfide bond</keyword>
<keyword id="KW-0255">Endonuclease</keyword>
<keyword id="KW-0325">Glycoprotein</keyword>
<keyword id="KW-0378">Hydrolase</keyword>
<keyword id="KW-0456">Lyase</keyword>
<keyword id="KW-0540">Nuclease</keyword>
<keyword id="KW-0964">Secreted</keyword>
<reference key="1">
    <citation type="journal article" date="1976" name="Biochem. J.">
        <title>The amino acid sequence of pike-whale (lesser-rorqual) pancreatic ribonuclease.</title>
        <authorList>
            <person name="Emmens M."/>
            <person name="Welling G.W."/>
            <person name="Beintema J.J."/>
        </authorList>
    </citation>
    <scope>PROTEIN SEQUENCE</scope>
    <scope>GLYCOSYLATION AT ASN-76</scope>
</reference>
<gene>
    <name type="primary">RNASE1</name>
    <name type="synonym">RNS1</name>
</gene>
<comment type="function">
    <text evidence="1">Endonuclease that catalyzes the cleavage of RNA on the 3' side of pyrimidine nucleotides. Acts on single-stranded and double-stranded RNA (By similarity).</text>
</comment>
<comment type="catalytic activity">
    <reaction>
        <text>an [RNA] containing cytidine + H2O = an [RNA]-3'-cytidine-3'-phosphate + a 5'-hydroxy-ribonucleotide-3'-[RNA].</text>
        <dbReference type="EC" id="4.6.1.18"/>
    </reaction>
</comment>
<comment type="catalytic activity">
    <reaction>
        <text>an [RNA] containing uridine + H2O = an [RNA]-3'-uridine-3'-phosphate + a 5'-hydroxy-ribonucleotide-3'-[RNA].</text>
        <dbReference type="EC" id="4.6.1.18"/>
    </reaction>
</comment>
<comment type="subunit">
    <text evidence="1">Monomer. Interacts with and forms tight 1:1 complexes with RNH1. Dimerization of two such complexes may occur. Interaction with RNH1 inhibits this protein (By similarity).</text>
</comment>
<comment type="subcellular location">
    <subcellularLocation>
        <location>Secreted</location>
    </subcellularLocation>
</comment>
<comment type="tissue specificity">
    <text>Pancreas.</text>
</comment>
<comment type="similarity">
    <text evidence="4">Belongs to the pancreatic ribonuclease family.</text>
</comment>
<accession>P00673</accession>
<dbReference type="EC" id="4.6.1.18"/>
<dbReference type="PIR" id="A00818">
    <property type="entry name" value="NRWHK"/>
</dbReference>
<dbReference type="SMR" id="P00673"/>
<dbReference type="GlyCosmos" id="P00673">
    <property type="glycosylation" value="1 site, No reported glycans"/>
</dbReference>
<dbReference type="iPTMnet" id="P00673"/>
<dbReference type="GO" id="GO:0005576">
    <property type="term" value="C:extracellular region"/>
    <property type="evidence" value="ECO:0007669"/>
    <property type="project" value="UniProtKB-SubCell"/>
</dbReference>
<dbReference type="GO" id="GO:0016829">
    <property type="term" value="F:lyase activity"/>
    <property type="evidence" value="ECO:0007669"/>
    <property type="project" value="UniProtKB-KW"/>
</dbReference>
<dbReference type="GO" id="GO:0003676">
    <property type="term" value="F:nucleic acid binding"/>
    <property type="evidence" value="ECO:0007669"/>
    <property type="project" value="InterPro"/>
</dbReference>
<dbReference type="GO" id="GO:0004522">
    <property type="term" value="F:ribonuclease A activity"/>
    <property type="evidence" value="ECO:0007669"/>
    <property type="project" value="UniProtKB-EC"/>
</dbReference>
<dbReference type="GO" id="GO:0050830">
    <property type="term" value="P:defense response to Gram-positive bacterium"/>
    <property type="evidence" value="ECO:0007669"/>
    <property type="project" value="TreeGrafter"/>
</dbReference>
<dbReference type="CDD" id="cd06265">
    <property type="entry name" value="RNase_A_canonical"/>
    <property type="match status" value="1"/>
</dbReference>
<dbReference type="FunFam" id="3.10.130.10:FF:000001">
    <property type="entry name" value="Ribonuclease pancreatic"/>
    <property type="match status" value="1"/>
</dbReference>
<dbReference type="Gene3D" id="3.10.130.10">
    <property type="entry name" value="Ribonuclease A-like domain"/>
    <property type="match status" value="1"/>
</dbReference>
<dbReference type="InterPro" id="IPR001427">
    <property type="entry name" value="RNaseA"/>
</dbReference>
<dbReference type="InterPro" id="IPR036816">
    <property type="entry name" value="RNaseA-like_dom_sf"/>
</dbReference>
<dbReference type="InterPro" id="IPR023411">
    <property type="entry name" value="RNaseA_AS"/>
</dbReference>
<dbReference type="InterPro" id="IPR023412">
    <property type="entry name" value="RNaseA_domain"/>
</dbReference>
<dbReference type="PANTHER" id="PTHR11437">
    <property type="entry name" value="RIBONUCLEASE"/>
    <property type="match status" value="1"/>
</dbReference>
<dbReference type="PANTHER" id="PTHR11437:SF24">
    <property type="entry name" value="RIBONUCLEASE PANCREATIC"/>
    <property type="match status" value="1"/>
</dbReference>
<dbReference type="Pfam" id="PF00074">
    <property type="entry name" value="RnaseA"/>
    <property type="match status" value="1"/>
</dbReference>
<dbReference type="PRINTS" id="PR00794">
    <property type="entry name" value="RIBONUCLEASE"/>
</dbReference>
<dbReference type="SMART" id="SM00092">
    <property type="entry name" value="RNAse_Pc"/>
    <property type="match status" value="1"/>
</dbReference>
<dbReference type="SUPFAM" id="SSF54076">
    <property type="entry name" value="RNase A-like"/>
    <property type="match status" value="1"/>
</dbReference>
<dbReference type="PROSITE" id="PS00127">
    <property type="entry name" value="RNASE_PANCREATIC"/>
    <property type="match status" value="1"/>
</dbReference>
<organism>
    <name type="scientific">Balaenoptera acutorostrata</name>
    <name type="common">Common minke whale</name>
    <name type="synonym">Balaena rostrata</name>
    <dbReference type="NCBI Taxonomy" id="9767"/>
    <lineage>
        <taxon>Eukaryota</taxon>
        <taxon>Metazoa</taxon>
        <taxon>Chordata</taxon>
        <taxon>Craniata</taxon>
        <taxon>Vertebrata</taxon>
        <taxon>Euteleostomi</taxon>
        <taxon>Mammalia</taxon>
        <taxon>Eutheria</taxon>
        <taxon>Laurasiatheria</taxon>
        <taxon>Artiodactyla</taxon>
        <taxon>Whippomorpha</taxon>
        <taxon>Cetacea</taxon>
        <taxon>Mysticeti</taxon>
        <taxon>Balaenopteridae</taxon>
        <taxon>Balaenoptera</taxon>
    </lineage>
</organism>
<name>RNAS1_BALAC</name>
<evidence type="ECO:0000250" key="1"/>
<evidence type="ECO:0000256" key="2">
    <source>
        <dbReference type="SAM" id="MobiDB-lite"/>
    </source>
</evidence>
<evidence type="ECO:0000269" key="3">
    <source>
    </source>
</evidence>
<evidence type="ECO:0000305" key="4"/>
<proteinExistence type="evidence at protein level"/>